<sequence length="249" mass="27590">MRVLVCKDYDGMSKKAAEMIAAQIVLKPNSILGLATGSTPVGMYRDLVKKYNDNIVDFSDVMSFNLDEYYKLPISNDQSYDYFMKENLFNHVNIKPENTHLPNGMADDIEKECMNYEASIDAAGGIDVQVLGIGRNAHIGFNEPDTKFAKRTHVVELTESTIEANARFFKSREDVPKKAVSMGIGSILKSKKILLLASGEEKADAVYNTVYGDITPEVPGSILQLHKDTIVIVDEAAASKLNPKDYKLV</sequence>
<feature type="chain" id="PRO_1000066970" description="Glucosamine-6-phosphate deaminase">
    <location>
        <begin position="1"/>
        <end position="249"/>
    </location>
</feature>
<feature type="active site" description="Proton acceptor; for enolization step" evidence="1">
    <location>
        <position position="67"/>
    </location>
</feature>
<feature type="active site" description="For ring-opening step" evidence="1">
    <location>
        <position position="136"/>
    </location>
</feature>
<feature type="active site" description="Proton acceptor; for ring-opening step" evidence="1">
    <location>
        <position position="138"/>
    </location>
</feature>
<feature type="active site" description="For ring-opening step" evidence="1">
    <location>
        <position position="143"/>
    </location>
</feature>
<proteinExistence type="inferred from homology"/>
<gene>
    <name evidence="1" type="primary">nagB</name>
    <name type="ordered locus">CD630_10110</name>
</gene>
<dbReference type="EC" id="3.5.99.6" evidence="1"/>
<dbReference type="EMBL" id="AM180355">
    <property type="protein sequence ID" value="CAJ67852.1"/>
    <property type="molecule type" value="Genomic_DNA"/>
</dbReference>
<dbReference type="RefSeq" id="WP_003437039.1">
    <property type="nucleotide sequence ID" value="NZ_JAUPES010000032.1"/>
</dbReference>
<dbReference type="RefSeq" id="YP_001087492.1">
    <property type="nucleotide sequence ID" value="NC_009089.1"/>
</dbReference>
<dbReference type="SMR" id="Q18AL0"/>
<dbReference type="STRING" id="272563.CD630_10110"/>
<dbReference type="EnsemblBacteria" id="CAJ67852">
    <property type="protein sequence ID" value="CAJ67852"/>
    <property type="gene ID" value="CD630_10110"/>
</dbReference>
<dbReference type="GeneID" id="66353438"/>
<dbReference type="KEGG" id="cdf:CD630_10110"/>
<dbReference type="KEGG" id="pdc:CDIF630_01147"/>
<dbReference type="PATRIC" id="fig|272563.120.peg.1050"/>
<dbReference type="eggNOG" id="COG0363">
    <property type="taxonomic scope" value="Bacteria"/>
</dbReference>
<dbReference type="OrthoDB" id="9791139at2"/>
<dbReference type="PhylomeDB" id="Q18AL0"/>
<dbReference type="BioCyc" id="PDIF272563:G12WB-1126-MONOMER"/>
<dbReference type="UniPathway" id="UPA00629">
    <property type="reaction ID" value="UER00684"/>
</dbReference>
<dbReference type="Proteomes" id="UP000001978">
    <property type="component" value="Chromosome"/>
</dbReference>
<dbReference type="GO" id="GO:0005737">
    <property type="term" value="C:cytoplasm"/>
    <property type="evidence" value="ECO:0007669"/>
    <property type="project" value="TreeGrafter"/>
</dbReference>
<dbReference type="GO" id="GO:0004342">
    <property type="term" value="F:glucosamine-6-phosphate deaminase activity"/>
    <property type="evidence" value="ECO:0007669"/>
    <property type="project" value="UniProtKB-UniRule"/>
</dbReference>
<dbReference type="GO" id="GO:0042802">
    <property type="term" value="F:identical protein binding"/>
    <property type="evidence" value="ECO:0007669"/>
    <property type="project" value="TreeGrafter"/>
</dbReference>
<dbReference type="GO" id="GO:0005975">
    <property type="term" value="P:carbohydrate metabolic process"/>
    <property type="evidence" value="ECO:0007669"/>
    <property type="project" value="InterPro"/>
</dbReference>
<dbReference type="GO" id="GO:0006043">
    <property type="term" value="P:glucosamine catabolic process"/>
    <property type="evidence" value="ECO:0007669"/>
    <property type="project" value="TreeGrafter"/>
</dbReference>
<dbReference type="GO" id="GO:0006046">
    <property type="term" value="P:N-acetylglucosamine catabolic process"/>
    <property type="evidence" value="ECO:0007669"/>
    <property type="project" value="TreeGrafter"/>
</dbReference>
<dbReference type="GO" id="GO:0019262">
    <property type="term" value="P:N-acetylneuraminate catabolic process"/>
    <property type="evidence" value="ECO:0007669"/>
    <property type="project" value="UniProtKB-UniRule"/>
</dbReference>
<dbReference type="CDD" id="cd01399">
    <property type="entry name" value="GlcN6P_deaminase"/>
    <property type="match status" value="1"/>
</dbReference>
<dbReference type="FunFam" id="3.40.50.1360:FF:000003">
    <property type="entry name" value="Glucosamine-6-phosphate deaminase"/>
    <property type="match status" value="1"/>
</dbReference>
<dbReference type="Gene3D" id="3.40.50.1360">
    <property type="match status" value="1"/>
</dbReference>
<dbReference type="HAMAP" id="MF_01241">
    <property type="entry name" value="GlcN6P_deamin"/>
    <property type="match status" value="1"/>
</dbReference>
<dbReference type="InterPro" id="IPR006148">
    <property type="entry name" value="Glc/Gal-6P_isomerase"/>
</dbReference>
<dbReference type="InterPro" id="IPR004547">
    <property type="entry name" value="Glucosamine6P_isomerase"/>
</dbReference>
<dbReference type="InterPro" id="IPR037171">
    <property type="entry name" value="NagB/RpiA_transferase-like"/>
</dbReference>
<dbReference type="NCBIfam" id="TIGR00502">
    <property type="entry name" value="nagB"/>
    <property type="match status" value="1"/>
</dbReference>
<dbReference type="NCBIfam" id="NF001684">
    <property type="entry name" value="PRK00443.1-4"/>
    <property type="match status" value="1"/>
</dbReference>
<dbReference type="PANTHER" id="PTHR11280">
    <property type="entry name" value="GLUCOSAMINE-6-PHOSPHATE ISOMERASE"/>
    <property type="match status" value="1"/>
</dbReference>
<dbReference type="PANTHER" id="PTHR11280:SF5">
    <property type="entry name" value="GLUCOSAMINE-6-PHOSPHATE ISOMERASE"/>
    <property type="match status" value="1"/>
</dbReference>
<dbReference type="Pfam" id="PF01182">
    <property type="entry name" value="Glucosamine_iso"/>
    <property type="match status" value="1"/>
</dbReference>
<dbReference type="SUPFAM" id="SSF100950">
    <property type="entry name" value="NagB/RpiA/CoA transferase-like"/>
    <property type="match status" value="1"/>
</dbReference>
<accession>Q18AL0</accession>
<name>NAGB_CLOD6</name>
<protein>
    <recommendedName>
        <fullName evidence="1">Glucosamine-6-phosphate deaminase</fullName>
        <ecNumber evidence="1">3.5.99.6</ecNumber>
    </recommendedName>
    <alternativeName>
        <fullName evidence="1">GlcN6P deaminase</fullName>
        <shortName evidence="1">GNPDA</shortName>
    </alternativeName>
    <alternativeName>
        <fullName evidence="1">Glucosamine-6-phosphate isomerase</fullName>
    </alternativeName>
</protein>
<evidence type="ECO:0000255" key="1">
    <source>
        <dbReference type="HAMAP-Rule" id="MF_01241"/>
    </source>
</evidence>
<reference key="1">
    <citation type="journal article" date="2006" name="Nat. Genet.">
        <title>The multidrug-resistant human pathogen Clostridium difficile has a highly mobile, mosaic genome.</title>
        <authorList>
            <person name="Sebaihia M."/>
            <person name="Wren B.W."/>
            <person name="Mullany P."/>
            <person name="Fairweather N.F."/>
            <person name="Minton N."/>
            <person name="Stabler R."/>
            <person name="Thomson N.R."/>
            <person name="Roberts A.P."/>
            <person name="Cerdeno-Tarraga A.M."/>
            <person name="Wang H."/>
            <person name="Holden M.T.G."/>
            <person name="Wright A."/>
            <person name="Churcher C."/>
            <person name="Quail M.A."/>
            <person name="Baker S."/>
            <person name="Bason N."/>
            <person name="Brooks K."/>
            <person name="Chillingworth T."/>
            <person name="Cronin A."/>
            <person name="Davis P."/>
            <person name="Dowd L."/>
            <person name="Fraser A."/>
            <person name="Feltwell T."/>
            <person name="Hance Z."/>
            <person name="Holroyd S."/>
            <person name="Jagels K."/>
            <person name="Moule S."/>
            <person name="Mungall K."/>
            <person name="Price C."/>
            <person name="Rabbinowitsch E."/>
            <person name="Sharp S."/>
            <person name="Simmonds M."/>
            <person name="Stevens K."/>
            <person name="Unwin L."/>
            <person name="Whithead S."/>
            <person name="Dupuy B."/>
            <person name="Dougan G."/>
            <person name="Barrell B."/>
            <person name="Parkhill J."/>
        </authorList>
    </citation>
    <scope>NUCLEOTIDE SEQUENCE [LARGE SCALE GENOMIC DNA]</scope>
    <source>
        <strain>630</strain>
    </source>
</reference>
<comment type="function">
    <text evidence="1">Catalyzes the reversible isomerization-deamination of glucosamine 6-phosphate (GlcN6P) to form fructose 6-phosphate (Fru6P) and ammonium ion.</text>
</comment>
<comment type="catalytic activity">
    <reaction evidence="1">
        <text>alpha-D-glucosamine 6-phosphate + H2O = beta-D-fructose 6-phosphate + NH4(+)</text>
        <dbReference type="Rhea" id="RHEA:12172"/>
        <dbReference type="ChEBI" id="CHEBI:15377"/>
        <dbReference type="ChEBI" id="CHEBI:28938"/>
        <dbReference type="ChEBI" id="CHEBI:57634"/>
        <dbReference type="ChEBI" id="CHEBI:75989"/>
        <dbReference type="EC" id="3.5.99.6"/>
    </reaction>
</comment>
<comment type="pathway">
    <text evidence="1">Amino-sugar metabolism; N-acetylneuraminate degradation; D-fructose 6-phosphate from N-acetylneuraminate: step 5/5.</text>
</comment>
<comment type="similarity">
    <text evidence="1">Belongs to the glucosamine/galactosamine-6-phosphate isomerase family. NagB subfamily.</text>
</comment>
<keyword id="KW-0119">Carbohydrate metabolism</keyword>
<keyword id="KW-0378">Hydrolase</keyword>
<keyword id="KW-1185">Reference proteome</keyword>
<organism>
    <name type="scientific">Clostridioides difficile (strain 630)</name>
    <name type="common">Peptoclostridium difficile</name>
    <dbReference type="NCBI Taxonomy" id="272563"/>
    <lineage>
        <taxon>Bacteria</taxon>
        <taxon>Bacillati</taxon>
        <taxon>Bacillota</taxon>
        <taxon>Clostridia</taxon>
        <taxon>Peptostreptococcales</taxon>
        <taxon>Peptostreptococcaceae</taxon>
        <taxon>Clostridioides</taxon>
    </lineage>
</organism>